<feature type="chain" id="PRO_0000220410" description="UPF0236 protein TTE0402">
    <location>
        <begin position="1"/>
        <end position="492"/>
    </location>
</feature>
<organism>
    <name type="scientific">Caldanaerobacter subterraneus subsp. tengcongensis (strain DSM 15242 / JCM 11007 / NBRC 100824 / MB4)</name>
    <name type="common">Thermoanaerobacter tengcongensis</name>
    <dbReference type="NCBI Taxonomy" id="273068"/>
    <lineage>
        <taxon>Bacteria</taxon>
        <taxon>Bacillati</taxon>
        <taxon>Bacillota</taxon>
        <taxon>Clostridia</taxon>
        <taxon>Thermoanaerobacterales</taxon>
        <taxon>Thermoanaerobacteraceae</taxon>
        <taxon>Caldanaerobacter</taxon>
    </lineage>
</organism>
<name>Y402_CALS4</name>
<sequence length="492" mass="57333">MKKTRDNPCDKIDCGKPKNTKGVSLVKKHIFEDIILQNALNFTEEVVEIFGDLLNKGMNITELVARIKELTDKLGRGAIEAIIEELDRIIKEDKRRKEKWVVERKDKKRLTTVLGDIEYERTYYKSKEDGRYTYLVDDALEIGRHDRIEKGVKIKLVENAIEESYERSSKKACPEELSKQTVLNAIREIGEVEVKREIKEKKEVRGLYIEADEDHVPLQDGRDETPRLVYIHEGREEKNGRNVLKNVYYKAYVGEKPEDIWIDVANYIEDNYKEEKIEKIYIAGDGAPWIKEGLKWILKSRFVLDRYHLNKYVLKATSKEPKYRDKIWRAINEGDKEGVKKVFDELIKAAEEEREKEKIKEAKKYILNNWEGIKIYSEDEDVIGCSAEGHISHVFSARLSRNPLGWSREGLKLMAKLRVFSKNGGDLREVEWGKKKNINAGSYKLTKKQIKEAVRRVKTSTNEKINNITVLNIGKVTPIYRVLRALKYAQVI</sequence>
<reference key="1">
    <citation type="journal article" date="2002" name="Genome Res.">
        <title>A complete sequence of the T. tengcongensis genome.</title>
        <authorList>
            <person name="Bao Q."/>
            <person name="Tian Y."/>
            <person name="Li W."/>
            <person name="Xu Z."/>
            <person name="Xuan Z."/>
            <person name="Hu S."/>
            <person name="Dong W."/>
            <person name="Yang J."/>
            <person name="Chen Y."/>
            <person name="Xue Y."/>
            <person name="Xu Y."/>
            <person name="Lai X."/>
            <person name="Huang L."/>
            <person name="Dong X."/>
            <person name="Ma Y."/>
            <person name="Ling L."/>
            <person name="Tan H."/>
            <person name="Chen R."/>
            <person name="Wang J."/>
            <person name="Yu J."/>
            <person name="Yang H."/>
        </authorList>
    </citation>
    <scope>NUCLEOTIDE SEQUENCE [LARGE SCALE GENOMIC DNA]</scope>
    <source>
        <strain>DSM 15242 / JCM 11007 / NBRC 100824 / MB4</strain>
    </source>
</reference>
<keyword id="KW-1185">Reference proteome</keyword>
<evidence type="ECO:0000305" key="1"/>
<gene>
    <name type="ordered locus">TTE0402</name>
</gene>
<proteinExistence type="inferred from homology"/>
<comment type="similarity">
    <text evidence="1">Belongs to the UPF0236 family.</text>
</comment>
<protein>
    <recommendedName>
        <fullName>UPF0236 protein TTE0402</fullName>
    </recommendedName>
</protein>
<accession>Q8RCM2</accession>
<dbReference type="EMBL" id="AE008691">
    <property type="protein sequence ID" value="AAM23686.1"/>
    <property type="molecule type" value="Genomic_DNA"/>
</dbReference>
<dbReference type="SMR" id="Q8RCM2"/>
<dbReference type="STRING" id="273068.TTE0402"/>
<dbReference type="KEGG" id="tte:TTE0402"/>
<dbReference type="eggNOG" id="COG3464">
    <property type="taxonomic scope" value="Bacteria"/>
</dbReference>
<dbReference type="HOGENOM" id="CLU_040782_0_1_9"/>
<dbReference type="Proteomes" id="UP000000555">
    <property type="component" value="Chromosome"/>
</dbReference>
<dbReference type="InterPro" id="IPR009620">
    <property type="entry name" value="UPF0236"/>
</dbReference>
<dbReference type="NCBIfam" id="NF033529">
    <property type="entry name" value="transpos_ISLre2"/>
    <property type="match status" value="1"/>
</dbReference>
<dbReference type="Pfam" id="PF06782">
    <property type="entry name" value="UPF0236"/>
    <property type="match status" value="1"/>
</dbReference>